<gene>
    <name evidence="1" type="primary">atpG</name>
    <name type="ordered locus">Abu_1596</name>
</gene>
<feature type="chain" id="PRO_1000062288" description="ATP synthase gamma chain">
    <location>
        <begin position="1"/>
        <end position="295"/>
    </location>
</feature>
<protein>
    <recommendedName>
        <fullName evidence="1">ATP synthase gamma chain</fullName>
    </recommendedName>
    <alternativeName>
        <fullName evidence="1">ATP synthase F1 sector gamma subunit</fullName>
    </alternativeName>
    <alternativeName>
        <fullName evidence="1">F-ATPase gamma subunit</fullName>
    </alternativeName>
</protein>
<accession>A8EV71</accession>
<keyword id="KW-0066">ATP synthesis</keyword>
<keyword id="KW-0997">Cell inner membrane</keyword>
<keyword id="KW-1003">Cell membrane</keyword>
<keyword id="KW-0139">CF(1)</keyword>
<keyword id="KW-0375">Hydrogen ion transport</keyword>
<keyword id="KW-0406">Ion transport</keyword>
<keyword id="KW-0472">Membrane</keyword>
<keyword id="KW-1185">Reference proteome</keyword>
<keyword id="KW-0813">Transport</keyword>
<sequence>MANLKEIKLKIGSVKNTQKTTKAMKLVSSAKLTRTRQLSEQARSYAHKINDVLSDIAARVSKVQDDGNIGRSFLQNDNPKTVDIVFVTADKGLCGGFNMATIKTVSRLISEYEAKGTKVRLRAAGRKGVDFFSFQGMTIEQKATDLSSAPDYDRAAEFIHNVVEDFKNEVTDKVVIVYNGFLNMLSQEIRVRDLLPISLDDVKIQDNASMLNIEPEEDEDEVLNELTDKYIDFNMYYALIDSLAAEHSARMQAMEAASKNAKEKVNSLTVEYNKARQAAITTELIEIISGVEALK</sequence>
<name>ATPG_ALIB4</name>
<evidence type="ECO:0000255" key="1">
    <source>
        <dbReference type="HAMAP-Rule" id="MF_00815"/>
    </source>
</evidence>
<organism>
    <name type="scientific">Aliarcobacter butzleri (strain RM4018)</name>
    <name type="common">Arcobacter butzleri</name>
    <dbReference type="NCBI Taxonomy" id="367737"/>
    <lineage>
        <taxon>Bacteria</taxon>
        <taxon>Pseudomonadati</taxon>
        <taxon>Campylobacterota</taxon>
        <taxon>Epsilonproteobacteria</taxon>
        <taxon>Campylobacterales</taxon>
        <taxon>Arcobacteraceae</taxon>
        <taxon>Aliarcobacter</taxon>
    </lineage>
</organism>
<dbReference type="EMBL" id="CP000361">
    <property type="protein sequence ID" value="ABV67844.1"/>
    <property type="molecule type" value="Genomic_DNA"/>
</dbReference>
<dbReference type="RefSeq" id="WP_012147588.1">
    <property type="nucleotide sequence ID" value="NC_009850.1"/>
</dbReference>
<dbReference type="SMR" id="A8EV71"/>
<dbReference type="STRING" id="367737.Abu_1596"/>
<dbReference type="GeneID" id="24303698"/>
<dbReference type="KEGG" id="abu:Abu_1596"/>
<dbReference type="eggNOG" id="COG0224">
    <property type="taxonomic scope" value="Bacteria"/>
</dbReference>
<dbReference type="HOGENOM" id="CLU_050669_0_1_7"/>
<dbReference type="Proteomes" id="UP000001136">
    <property type="component" value="Chromosome"/>
</dbReference>
<dbReference type="GO" id="GO:0005886">
    <property type="term" value="C:plasma membrane"/>
    <property type="evidence" value="ECO:0007669"/>
    <property type="project" value="UniProtKB-SubCell"/>
</dbReference>
<dbReference type="GO" id="GO:0045259">
    <property type="term" value="C:proton-transporting ATP synthase complex"/>
    <property type="evidence" value="ECO:0007669"/>
    <property type="project" value="UniProtKB-KW"/>
</dbReference>
<dbReference type="GO" id="GO:0005524">
    <property type="term" value="F:ATP binding"/>
    <property type="evidence" value="ECO:0007669"/>
    <property type="project" value="UniProtKB-UniRule"/>
</dbReference>
<dbReference type="GO" id="GO:0046933">
    <property type="term" value="F:proton-transporting ATP synthase activity, rotational mechanism"/>
    <property type="evidence" value="ECO:0007669"/>
    <property type="project" value="UniProtKB-UniRule"/>
</dbReference>
<dbReference type="GO" id="GO:0042777">
    <property type="term" value="P:proton motive force-driven plasma membrane ATP synthesis"/>
    <property type="evidence" value="ECO:0007669"/>
    <property type="project" value="UniProtKB-UniRule"/>
</dbReference>
<dbReference type="CDD" id="cd12151">
    <property type="entry name" value="F1-ATPase_gamma"/>
    <property type="match status" value="1"/>
</dbReference>
<dbReference type="FunFam" id="1.10.287.80:FF:000007">
    <property type="entry name" value="ATP synthase gamma chain"/>
    <property type="match status" value="1"/>
</dbReference>
<dbReference type="FunFam" id="3.40.1380.10:FF:000006">
    <property type="entry name" value="ATP synthase gamma chain"/>
    <property type="match status" value="1"/>
</dbReference>
<dbReference type="Gene3D" id="3.40.1380.10">
    <property type="match status" value="1"/>
</dbReference>
<dbReference type="Gene3D" id="1.10.287.80">
    <property type="entry name" value="ATP synthase, gamma subunit, helix hairpin domain"/>
    <property type="match status" value="2"/>
</dbReference>
<dbReference type="HAMAP" id="MF_00815">
    <property type="entry name" value="ATP_synth_gamma_bact"/>
    <property type="match status" value="1"/>
</dbReference>
<dbReference type="InterPro" id="IPR035968">
    <property type="entry name" value="ATP_synth_F1_ATPase_gsu"/>
</dbReference>
<dbReference type="InterPro" id="IPR000131">
    <property type="entry name" value="ATP_synth_F1_gsu"/>
</dbReference>
<dbReference type="NCBIfam" id="TIGR01146">
    <property type="entry name" value="ATPsyn_F1gamma"/>
    <property type="match status" value="1"/>
</dbReference>
<dbReference type="PANTHER" id="PTHR11693">
    <property type="entry name" value="ATP SYNTHASE GAMMA CHAIN"/>
    <property type="match status" value="1"/>
</dbReference>
<dbReference type="PANTHER" id="PTHR11693:SF22">
    <property type="entry name" value="ATP SYNTHASE SUBUNIT GAMMA, MITOCHONDRIAL"/>
    <property type="match status" value="1"/>
</dbReference>
<dbReference type="Pfam" id="PF00231">
    <property type="entry name" value="ATP-synt"/>
    <property type="match status" value="1"/>
</dbReference>
<dbReference type="PRINTS" id="PR00126">
    <property type="entry name" value="ATPASEGAMMA"/>
</dbReference>
<dbReference type="SUPFAM" id="SSF52943">
    <property type="entry name" value="ATP synthase (F1-ATPase), gamma subunit"/>
    <property type="match status" value="1"/>
</dbReference>
<proteinExistence type="inferred from homology"/>
<comment type="function">
    <text evidence="1">Produces ATP from ADP in the presence of a proton gradient across the membrane. The gamma chain is believed to be important in regulating ATPase activity and the flow of protons through the CF(0) complex.</text>
</comment>
<comment type="subunit">
    <text evidence="1">F-type ATPases have 2 components, CF(1) - the catalytic core - and CF(0) - the membrane proton channel. CF(1) has five subunits: alpha(3), beta(3), gamma(1), delta(1), epsilon(1). CF(0) has three main subunits: a, b and c.</text>
</comment>
<comment type="subcellular location">
    <subcellularLocation>
        <location evidence="1">Cell inner membrane</location>
        <topology evidence="1">Peripheral membrane protein</topology>
    </subcellularLocation>
</comment>
<comment type="similarity">
    <text evidence="1">Belongs to the ATPase gamma chain family.</text>
</comment>
<reference key="1">
    <citation type="journal article" date="2007" name="PLoS ONE">
        <title>The complete genome sequence and analysis of the Epsilonproteobacterium Arcobacter butzleri.</title>
        <authorList>
            <person name="Miller W.G."/>
            <person name="Parker C.T."/>
            <person name="Rubenfield M."/>
            <person name="Mendz G.L."/>
            <person name="Woesten M.M.S.M."/>
            <person name="Ussery D.W."/>
            <person name="Stolz J.F."/>
            <person name="Binnewies T.T."/>
            <person name="Hallin P.F."/>
            <person name="Wang G."/>
            <person name="Malek J.A."/>
            <person name="Rogosin A."/>
            <person name="Stanker L.H."/>
            <person name="Mandrell R.E."/>
        </authorList>
    </citation>
    <scope>NUCLEOTIDE SEQUENCE [LARGE SCALE GENOMIC DNA]</scope>
    <source>
        <strain>RM4018</strain>
    </source>
</reference>